<sequence length="188" mass="22004">MSDIIDDFQKDVTINMQKCIDNFKININKIHVGRISPDILSFIKIEYYGVITPLCQLTNTVVEQPRTLIITVFDSSMIKFIEKAILESNLGCTPVSTGNTIRVTFPTLTESRRYSLIKMVRSESEKSKVLIRNIRRVSNDKLKTFLRNKEINKDNEHYFQNEIQNLTDIWIKKIILITKEKELELMKF</sequence>
<comment type="function">
    <text evidence="1">Responsible for the release of ribosomes from messenger RNA at the termination of protein biosynthesis. May increase the efficiency of translation by recycling ribosomes from one round of translation to another.</text>
</comment>
<comment type="subcellular location">
    <subcellularLocation>
        <location evidence="1">Cytoplasm</location>
    </subcellularLocation>
</comment>
<comment type="similarity">
    <text evidence="1">Belongs to the RRF family.</text>
</comment>
<dbReference type="EMBL" id="BX248583">
    <property type="protein sequence ID" value="CAD83345.1"/>
    <property type="molecule type" value="Genomic_DNA"/>
</dbReference>
<dbReference type="SMR" id="Q7VRE3"/>
<dbReference type="STRING" id="203907.Bfl274"/>
<dbReference type="KEGG" id="bfl:Bfl274"/>
<dbReference type="eggNOG" id="COG0233">
    <property type="taxonomic scope" value="Bacteria"/>
</dbReference>
<dbReference type="HOGENOM" id="CLU_073981_2_1_6"/>
<dbReference type="OrthoDB" id="9804006at2"/>
<dbReference type="Proteomes" id="UP000002192">
    <property type="component" value="Chromosome"/>
</dbReference>
<dbReference type="GO" id="GO:0005829">
    <property type="term" value="C:cytosol"/>
    <property type="evidence" value="ECO:0007669"/>
    <property type="project" value="GOC"/>
</dbReference>
<dbReference type="GO" id="GO:0043023">
    <property type="term" value="F:ribosomal large subunit binding"/>
    <property type="evidence" value="ECO:0007669"/>
    <property type="project" value="TreeGrafter"/>
</dbReference>
<dbReference type="GO" id="GO:0002184">
    <property type="term" value="P:cytoplasmic translational termination"/>
    <property type="evidence" value="ECO:0007669"/>
    <property type="project" value="TreeGrafter"/>
</dbReference>
<dbReference type="CDD" id="cd00520">
    <property type="entry name" value="RRF"/>
    <property type="match status" value="1"/>
</dbReference>
<dbReference type="FunFam" id="3.30.1360.40:FF:000001">
    <property type="entry name" value="Ribosome-recycling factor"/>
    <property type="match status" value="1"/>
</dbReference>
<dbReference type="Gene3D" id="3.30.1360.40">
    <property type="match status" value="1"/>
</dbReference>
<dbReference type="Gene3D" id="1.10.132.20">
    <property type="entry name" value="Ribosome-recycling factor"/>
    <property type="match status" value="1"/>
</dbReference>
<dbReference type="HAMAP" id="MF_00040">
    <property type="entry name" value="RRF"/>
    <property type="match status" value="1"/>
</dbReference>
<dbReference type="InterPro" id="IPR002661">
    <property type="entry name" value="Ribosome_recyc_fac"/>
</dbReference>
<dbReference type="InterPro" id="IPR023584">
    <property type="entry name" value="Ribosome_recyc_fac_dom"/>
</dbReference>
<dbReference type="InterPro" id="IPR036191">
    <property type="entry name" value="RRF_sf"/>
</dbReference>
<dbReference type="NCBIfam" id="TIGR00496">
    <property type="entry name" value="frr"/>
    <property type="match status" value="1"/>
</dbReference>
<dbReference type="PANTHER" id="PTHR20982:SF3">
    <property type="entry name" value="MITOCHONDRIAL RIBOSOME RECYCLING FACTOR PSEUDO 1"/>
    <property type="match status" value="1"/>
</dbReference>
<dbReference type="PANTHER" id="PTHR20982">
    <property type="entry name" value="RIBOSOME RECYCLING FACTOR"/>
    <property type="match status" value="1"/>
</dbReference>
<dbReference type="Pfam" id="PF01765">
    <property type="entry name" value="RRF"/>
    <property type="match status" value="1"/>
</dbReference>
<dbReference type="SUPFAM" id="SSF55194">
    <property type="entry name" value="Ribosome recycling factor, RRF"/>
    <property type="match status" value="1"/>
</dbReference>
<evidence type="ECO:0000255" key="1">
    <source>
        <dbReference type="HAMAP-Rule" id="MF_00040"/>
    </source>
</evidence>
<gene>
    <name evidence="1" type="primary">frr</name>
    <name type="ordered locus">Bfl274</name>
</gene>
<keyword id="KW-0963">Cytoplasm</keyword>
<keyword id="KW-0648">Protein biosynthesis</keyword>
<keyword id="KW-1185">Reference proteome</keyword>
<feature type="chain" id="PRO_0000167435" description="Ribosome-recycling factor">
    <location>
        <begin position="1"/>
        <end position="188"/>
    </location>
</feature>
<proteinExistence type="inferred from homology"/>
<protein>
    <recommendedName>
        <fullName evidence="1">Ribosome-recycling factor</fullName>
        <shortName evidence="1">RRF</shortName>
    </recommendedName>
    <alternativeName>
        <fullName evidence="1">Ribosome-releasing factor</fullName>
    </alternativeName>
</protein>
<reference key="1">
    <citation type="journal article" date="2003" name="Proc. Natl. Acad. Sci. U.S.A.">
        <title>The genome sequence of Blochmannia floridanus: comparative analysis of reduced genomes.</title>
        <authorList>
            <person name="Gil R."/>
            <person name="Silva F.J."/>
            <person name="Zientz E."/>
            <person name="Delmotte F."/>
            <person name="Gonzalez-Candelas F."/>
            <person name="Latorre A."/>
            <person name="Rausell C."/>
            <person name="Kamerbeek J."/>
            <person name="Gadau J."/>
            <person name="Hoelldobler B."/>
            <person name="van Ham R.C.H.J."/>
            <person name="Gross R."/>
            <person name="Moya A."/>
        </authorList>
    </citation>
    <scope>NUCLEOTIDE SEQUENCE [LARGE SCALE GENOMIC DNA]</scope>
</reference>
<organism>
    <name type="scientific">Blochmanniella floridana</name>
    <dbReference type="NCBI Taxonomy" id="203907"/>
    <lineage>
        <taxon>Bacteria</taxon>
        <taxon>Pseudomonadati</taxon>
        <taxon>Pseudomonadota</taxon>
        <taxon>Gammaproteobacteria</taxon>
        <taxon>Enterobacterales</taxon>
        <taxon>Enterobacteriaceae</taxon>
        <taxon>ant endosymbionts</taxon>
        <taxon>Candidatus Blochmanniella</taxon>
    </lineage>
</organism>
<name>RRF_BLOFL</name>
<accession>Q7VRE3</accession>